<keyword id="KW-0408">Iron</keyword>
<keyword id="KW-0479">Metal-binding</keyword>
<keyword id="KW-0520">NAD</keyword>
<keyword id="KW-1185">Reference proteome</keyword>
<keyword id="KW-0784">Thiamine biosynthesis</keyword>
<keyword id="KW-0808">Transferase</keyword>
<accession>Q3V7Z9</accession>
<evidence type="ECO:0000255" key="1">
    <source>
        <dbReference type="HAMAP-Rule" id="MF_00304"/>
    </source>
</evidence>
<evidence type="ECO:0000256" key="2">
    <source>
        <dbReference type="SAM" id="MobiDB-lite"/>
    </source>
</evidence>
<evidence type="ECO:0000305" key="3"/>
<feature type="chain" id="PRO_0000259378" description="Thiamine thiazole synthase">
    <location>
        <begin position="1"/>
        <end position="310"/>
    </location>
</feature>
<feature type="region of interest" description="Disordered" evidence="2">
    <location>
        <begin position="202"/>
        <end position="226"/>
    </location>
</feature>
<feature type="compositionally biased region" description="Acidic residues" evidence="2">
    <location>
        <begin position="205"/>
        <end position="219"/>
    </location>
</feature>
<feature type="binding site" description="in other chain" evidence="1">
    <location>
        <position position="46"/>
    </location>
    <ligand>
        <name>NAD(+)</name>
        <dbReference type="ChEBI" id="CHEBI:57540"/>
        <note>ligand shared between two adjacent protomers</note>
    </ligand>
</feature>
<feature type="binding site" description="in other chain" evidence="1">
    <location>
        <begin position="65"/>
        <end position="66"/>
    </location>
    <ligand>
        <name>NAD(+)</name>
        <dbReference type="ChEBI" id="CHEBI:57540"/>
        <note>ligand shared between two adjacent protomers</note>
    </ligand>
</feature>
<feature type="binding site" description="in other chain" evidence="1">
    <location>
        <position position="73"/>
    </location>
    <ligand>
        <name>NAD(+)</name>
        <dbReference type="ChEBI" id="CHEBI:57540"/>
        <note>ligand shared between two adjacent protomers</note>
    </ligand>
</feature>
<feature type="binding site" evidence="1">
    <location>
        <position position="171"/>
    </location>
    <ligand>
        <name>Fe cation</name>
        <dbReference type="ChEBI" id="CHEBI:24875"/>
        <note>ligand shared between two adjacent protomers</note>
    </ligand>
</feature>
<feature type="binding site" evidence="1">
    <location>
        <position position="171"/>
    </location>
    <ligand>
        <name>NAD(+)</name>
        <dbReference type="ChEBI" id="CHEBI:57540"/>
        <note>ligand shared between two adjacent protomers</note>
    </ligand>
</feature>
<feature type="binding site" description="in other chain" evidence="1">
    <location>
        <position position="186"/>
    </location>
    <ligand>
        <name>Fe cation</name>
        <dbReference type="ChEBI" id="CHEBI:24875"/>
        <note>ligand shared between two adjacent protomers</note>
    </ligand>
</feature>
<feature type="binding site" description="in other chain" evidence="1">
    <location>
        <position position="258"/>
    </location>
    <ligand>
        <name>NAD(+)</name>
        <dbReference type="ChEBI" id="CHEBI:57540"/>
        <note>ligand shared between two adjacent protomers</note>
    </ligand>
</feature>
<feature type="binding site" evidence="1">
    <location>
        <position position="268"/>
    </location>
    <ligand>
        <name>glycine</name>
        <dbReference type="ChEBI" id="CHEBI:57305"/>
    </ligand>
</feature>
<feature type="modified residue" description="2,3-didehydroalanine (Cys)" evidence="1">
    <location>
        <position position="169"/>
    </location>
</feature>
<reference key="1">
    <citation type="journal article" date="2004" name="Genome Res.">
        <title>Genome sequence of Haloarcula marismortui: a halophilic archaeon from the Dead Sea.</title>
        <authorList>
            <person name="Baliga N.S."/>
            <person name="Bonneau R."/>
            <person name="Facciotti M.T."/>
            <person name="Pan M."/>
            <person name="Glusman G."/>
            <person name="Deutsch E.W."/>
            <person name="Shannon P."/>
            <person name="Chiu Y."/>
            <person name="Weng R.S."/>
            <person name="Gan R.R."/>
            <person name="Hung P."/>
            <person name="Date S.V."/>
            <person name="Marcotte E."/>
            <person name="Hood L."/>
            <person name="Ng W.V."/>
        </authorList>
    </citation>
    <scope>NUCLEOTIDE SEQUENCE [LARGE SCALE GENOMIC DNA]</scope>
    <source>
        <strain>ATCC 43049 / DSM 3752 / JCM 8966 / VKM B-1809</strain>
    </source>
</reference>
<comment type="function">
    <text evidence="1">Involved in biosynthesis of the thiamine precursor thiazole. Catalyzes the conversion of NAD and glycine to adenosine diphosphate 5-(2-hydroxyethyl)-4-methylthiazole-2-carboxylic acid (ADT), an adenylated thiazole intermediate. The reaction includes an iron-dependent sulfide transfer from a conserved cysteine residue of the protein to a thiazole intermediate. The enzyme can only undergo a single turnover, which suggests it is a suicide enzyme.</text>
</comment>
<comment type="catalytic activity">
    <reaction evidence="1">
        <text>[ADP-thiazole synthase]-L-cysteine + glycine + NAD(+) = [ADP-thiazole synthase]-dehydroalanine + ADP-5-ethyl-4-methylthiazole-2-carboxylate + nicotinamide + 3 H2O + 2 H(+)</text>
        <dbReference type="Rhea" id="RHEA:55708"/>
        <dbReference type="Rhea" id="RHEA-COMP:14264"/>
        <dbReference type="Rhea" id="RHEA-COMP:14265"/>
        <dbReference type="ChEBI" id="CHEBI:15377"/>
        <dbReference type="ChEBI" id="CHEBI:15378"/>
        <dbReference type="ChEBI" id="CHEBI:17154"/>
        <dbReference type="ChEBI" id="CHEBI:29950"/>
        <dbReference type="ChEBI" id="CHEBI:57305"/>
        <dbReference type="ChEBI" id="CHEBI:57540"/>
        <dbReference type="ChEBI" id="CHEBI:90873"/>
        <dbReference type="ChEBI" id="CHEBI:139151"/>
        <dbReference type="EC" id="2.4.2.60"/>
    </reaction>
</comment>
<comment type="cofactor">
    <cofactor evidence="1">
        <name>Fe(2+)</name>
        <dbReference type="ChEBI" id="CHEBI:29033"/>
    </cofactor>
</comment>
<comment type="pathway">
    <text evidence="1">Cofactor biosynthesis; thiamine diphosphate biosynthesis.</text>
</comment>
<comment type="subunit">
    <text evidence="1">Homooctamer; tetramer of dimers.</text>
</comment>
<comment type="PTM">
    <text evidence="1">During the catalytic reaction, a sulfide is transferred from Cys-169 to a reaction intermediate, generating a dehydroalanine residue.</text>
</comment>
<comment type="similarity">
    <text evidence="1">Belongs to the THI4 family.</text>
</comment>
<comment type="sequence caution" evidence="3">
    <conflict type="erroneous initiation">
        <sequence resource="EMBL-CDS" id="AAV46676"/>
    </conflict>
</comment>
<dbReference type="EC" id="2.4.2.60" evidence="1"/>
<dbReference type="EMBL" id="AY596297">
    <property type="protein sequence ID" value="AAV46676.1"/>
    <property type="status" value="ALT_INIT"/>
    <property type="molecule type" value="Genomic_DNA"/>
</dbReference>
<dbReference type="RefSeq" id="WP_004957848.1">
    <property type="nucleotide sequence ID" value="NZ_CP039138.1"/>
</dbReference>
<dbReference type="SMR" id="Q3V7Z9"/>
<dbReference type="STRING" id="272569.rrnAC1782"/>
<dbReference type="PaxDb" id="272569-rrnAC1782"/>
<dbReference type="EnsemblBacteria" id="AAV46676">
    <property type="protein sequence ID" value="AAV46676"/>
    <property type="gene ID" value="rrnAC1782"/>
</dbReference>
<dbReference type="KEGG" id="hma:rrnAC1782"/>
<dbReference type="PATRIC" id="fig|272569.17.peg.2456"/>
<dbReference type="eggNOG" id="arCOG00574">
    <property type="taxonomic scope" value="Archaea"/>
</dbReference>
<dbReference type="HOGENOM" id="CLU_053727_0_0_2"/>
<dbReference type="UniPathway" id="UPA00060"/>
<dbReference type="Proteomes" id="UP000001169">
    <property type="component" value="Chromosome I"/>
</dbReference>
<dbReference type="GO" id="GO:0160205">
    <property type="term" value="F:cysteine-dependent adenosine diphosphate thiazole synthase activity"/>
    <property type="evidence" value="ECO:0007669"/>
    <property type="project" value="RHEA"/>
</dbReference>
<dbReference type="GO" id="GO:0005506">
    <property type="term" value="F:iron ion binding"/>
    <property type="evidence" value="ECO:0007669"/>
    <property type="project" value="UniProtKB-UniRule"/>
</dbReference>
<dbReference type="GO" id="GO:0009228">
    <property type="term" value="P:thiamine biosynthetic process"/>
    <property type="evidence" value="ECO:0007669"/>
    <property type="project" value="UniProtKB-KW"/>
</dbReference>
<dbReference type="GO" id="GO:0009229">
    <property type="term" value="P:thiamine diphosphate biosynthetic process"/>
    <property type="evidence" value="ECO:0007669"/>
    <property type="project" value="UniProtKB-UniRule"/>
</dbReference>
<dbReference type="GO" id="GO:0052837">
    <property type="term" value="P:thiazole biosynthetic process"/>
    <property type="evidence" value="ECO:0007669"/>
    <property type="project" value="UniProtKB-UniRule"/>
</dbReference>
<dbReference type="Gene3D" id="3.50.50.60">
    <property type="entry name" value="FAD/NAD(P)-binding domain"/>
    <property type="match status" value="1"/>
</dbReference>
<dbReference type="HAMAP" id="MF_00304">
    <property type="entry name" value="Thi4"/>
    <property type="match status" value="1"/>
</dbReference>
<dbReference type="InterPro" id="IPR036188">
    <property type="entry name" value="FAD/NAD-bd_sf"/>
</dbReference>
<dbReference type="InterPro" id="IPR002922">
    <property type="entry name" value="Thi4_fam"/>
</dbReference>
<dbReference type="InterPro" id="IPR022828">
    <property type="entry name" value="Thi4_prok"/>
</dbReference>
<dbReference type="NCBIfam" id="TIGR00292">
    <property type="entry name" value="sulfide-dependent adenosine diphosphate thiazole synthase"/>
    <property type="match status" value="1"/>
</dbReference>
<dbReference type="PANTHER" id="PTHR43422">
    <property type="entry name" value="THIAMINE THIAZOLE SYNTHASE"/>
    <property type="match status" value="1"/>
</dbReference>
<dbReference type="PANTHER" id="PTHR43422:SF3">
    <property type="entry name" value="THIAMINE THIAZOLE SYNTHASE"/>
    <property type="match status" value="1"/>
</dbReference>
<dbReference type="Pfam" id="PF01946">
    <property type="entry name" value="Thi4"/>
    <property type="match status" value="2"/>
</dbReference>
<dbReference type="PRINTS" id="PR00411">
    <property type="entry name" value="PNDRDTASEI"/>
</dbReference>
<dbReference type="SUPFAM" id="SSF51905">
    <property type="entry name" value="FAD/NAD(P)-binding domain"/>
    <property type="match status" value="1"/>
</dbReference>
<gene>
    <name evidence="1" type="primary">thi4</name>
    <name type="ordered locus">rrnAC1782</name>
</gene>
<name>THI4_HALMA</name>
<protein>
    <recommendedName>
        <fullName evidence="1">Thiamine thiazole synthase</fullName>
        <ecNumber evidence="1">2.4.2.60</ecNumber>
    </recommendedName>
</protein>
<sequence length="310" mass="33015">MSDSDSFEQFSDVGEAEVTRAIGQEWTEEFMDFSDSDVIIVGGGPSGLMAAKELAERGVQVMVVEKNNYLGGGFWLGGFLMNKVTVRDPAQQVLDELEVDHKRSKDSEGLYVANGPEACSGLIKAACDAGAKMQNMTEFTDIVIREDHRVGGIVMNWTPVHALPREITCVDPIAVEADLVIDATGHDAMAVKKLDERGVLNAPGLEDEASGMDQTDDDTYGAPGHDSPGHDSMWVGESEDAVVEHTGLAHDGLVVTGMATATTYGLPRMGPTFGAMLVSGKRAAQVALDELEVDAEPVDVTSRDATPADD</sequence>
<organism>
    <name type="scientific">Haloarcula marismortui (strain ATCC 43049 / DSM 3752 / JCM 8966 / VKM B-1809)</name>
    <name type="common">Halobacterium marismortui</name>
    <dbReference type="NCBI Taxonomy" id="272569"/>
    <lineage>
        <taxon>Archaea</taxon>
        <taxon>Methanobacteriati</taxon>
        <taxon>Methanobacteriota</taxon>
        <taxon>Stenosarchaea group</taxon>
        <taxon>Halobacteria</taxon>
        <taxon>Halobacteriales</taxon>
        <taxon>Haloarculaceae</taxon>
        <taxon>Haloarcula</taxon>
    </lineage>
</organism>
<proteinExistence type="inferred from homology"/>